<gene>
    <name evidence="1" type="primary">rlmI</name>
    <name type="ordered locus">YpAngola_A3209</name>
</gene>
<evidence type="ECO:0000255" key="1">
    <source>
        <dbReference type="HAMAP-Rule" id="MF_01857"/>
    </source>
</evidence>
<reference key="1">
    <citation type="journal article" date="2010" name="J. Bacteriol.">
        <title>Genome sequence of the deep-rooted Yersinia pestis strain Angola reveals new insights into the evolution and pangenome of the plague bacterium.</title>
        <authorList>
            <person name="Eppinger M."/>
            <person name="Worsham P.L."/>
            <person name="Nikolich M.P."/>
            <person name="Riley D.R."/>
            <person name="Sebastian Y."/>
            <person name="Mou S."/>
            <person name="Achtman M."/>
            <person name="Lindler L.E."/>
            <person name="Ravel J."/>
        </authorList>
    </citation>
    <scope>NUCLEOTIDE SEQUENCE [LARGE SCALE GENOMIC DNA]</scope>
    <source>
        <strain>Angola</strain>
    </source>
</reference>
<sequence>MTVRLILAKGREKSLLRRHPWIFSGAVQRLEGDALSGETIDILDSQGKWLARAAYSPESQILARVWTFQQDEVIDCAFFIRRLQQAQNWRDWLAQRDGLNGYRLIAGESDGLPGITIDRFQNFLVLQLLSAGAEYQRETLVSALQHCYPECSIYDRSDVSVRKKEGLPLTQGLICGEMPPALLPISENGMQLFVDIQQGHKTGFYLDQRDSRLAARNYANGRRVLNCFSYTGAFAVAALMGNCQQVISVDTSQSVLDIAKQNIELNQLDLSKTEFVRDDVFQLLRSYRAQGEKFDLIIMDPPKFVENKSQLASACRGYKDINMLAIQLLRPGGILLSFSCSGLMPVDLFQKILADAALDAGHDIQFIEQFRQAADHPVIAAYPEGLYLKGFACRVM</sequence>
<organism>
    <name type="scientific">Yersinia pestis bv. Antiqua (strain Angola)</name>
    <dbReference type="NCBI Taxonomy" id="349746"/>
    <lineage>
        <taxon>Bacteria</taxon>
        <taxon>Pseudomonadati</taxon>
        <taxon>Pseudomonadota</taxon>
        <taxon>Gammaproteobacteria</taxon>
        <taxon>Enterobacterales</taxon>
        <taxon>Yersiniaceae</taxon>
        <taxon>Yersinia</taxon>
    </lineage>
</organism>
<feature type="chain" id="PRO_0000366282" description="Ribosomal RNA large subunit methyltransferase I">
    <location>
        <begin position="1"/>
        <end position="396"/>
    </location>
</feature>
<feature type="domain" description="PUA" evidence="1">
    <location>
        <begin position="2"/>
        <end position="81"/>
    </location>
</feature>
<comment type="function">
    <text evidence="1">Specifically methylates the cytosine at position 1962 (m5C1962) of 23S rRNA.</text>
</comment>
<comment type="catalytic activity">
    <reaction evidence="1">
        <text>cytidine(1962) in 23S rRNA + S-adenosyl-L-methionine = 5-methylcytidine(1962) in 23S rRNA + S-adenosyl-L-homocysteine + H(+)</text>
        <dbReference type="Rhea" id="RHEA:42912"/>
        <dbReference type="Rhea" id="RHEA-COMP:10382"/>
        <dbReference type="Rhea" id="RHEA-COMP:10386"/>
        <dbReference type="ChEBI" id="CHEBI:15378"/>
        <dbReference type="ChEBI" id="CHEBI:57856"/>
        <dbReference type="ChEBI" id="CHEBI:59789"/>
        <dbReference type="ChEBI" id="CHEBI:74483"/>
        <dbReference type="ChEBI" id="CHEBI:82748"/>
        <dbReference type="EC" id="2.1.1.191"/>
    </reaction>
</comment>
<comment type="subcellular location">
    <subcellularLocation>
        <location evidence="1">Cytoplasm</location>
    </subcellularLocation>
</comment>
<comment type="similarity">
    <text evidence="1">Belongs to the methyltransferase superfamily. RlmI family.</text>
</comment>
<accession>A9R2N9</accession>
<dbReference type="EC" id="2.1.1.191" evidence="1"/>
<dbReference type="EMBL" id="CP000901">
    <property type="protein sequence ID" value="ABX88119.1"/>
    <property type="molecule type" value="Genomic_DNA"/>
</dbReference>
<dbReference type="RefSeq" id="WP_002213052.1">
    <property type="nucleotide sequence ID" value="NZ_CP009935.1"/>
</dbReference>
<dbReference type="SMR" id="A9R2N9"/>
<dbReference type="GeneID" id="57977118"/>
<dbReference type="KEGG" id="ypg:YpAngola_A3209"/>
<dbReference type="PATRIC" id="fig|349746.12.peg.4270"/>
<dbReference type="GO" id="GO:0005737">
    <property type="term" value="C:cytoplasm"/>
    <property type="evidence" value="ECO:0007669"/>
    <property type="project" value="UniProtKB-SubCell"/>
</dbReference>
<dbReference type="GO" id="GO:0003723">
    <property type="term" value="F:RNA binding"/>
    <property type="evidence" value="ECO:0007669"/>
    <property type="project" value="UniProtKB-KW"/>
</dbReference>
<dbReference type="GO" id="GO:0016434">
    <property type="term" value="F:rRNA (cytosine) methyltransferase activity"/>
    <property type="evidence" value="ECO:0007669"/>
    <property type="project" value="UniProtKB-UniRule"/>
</dbReference>
<dbReference type="CDD" id="cd02440">
    <property type="entry name" value="AdoMet_MTases"/>
    <property type="match status" value="1"/>
</dbReference>
<dbReference type="CDD" id="cd21153">
    <property type="entry name" value="PUA_RlmI"/>
    <property type="match status" value="1"/>
</dbReference>
<dbReference type="CDD" id="cd11572">
    <property type="entry name" value="RlmI_M_like"/>
    <property type="match status" value="1"/>
</dbReference>
<dbReference type="Gene3D" id="2.30.130.10">
    <property type="entry name" value="PUA domain"/>
    <property type="match status" value="1"/>
</dbReference>
<dbReference type="Gene3D" id="3.30.750.80">
    <property type="entry name" value="RNA methyltransferase domain (HRMD) like"/>
    <property type="match status" value="1"/>
</dbReference>
<dbReference type="Gene3D" id="3.40.50.150">
    <property type="entry name" value="Vaccinia Virus protein VP39"/>
    <property type="match status" value="1"/>
</dbReference>
<dbReference type="HAMAP" id="MF_01857">
    <property type="entry name" value="23SrRNA_methyltr_I"/>
    <property type="match status" value="1"/>
</dbReference>
<dbReference type="InterPro" id="IPR002478">
    <property type="entry name" value="PUA"/>
</dbReference>
<dbReference type="InterPro" id="IPR015947">
    <property type="entry name" value="PUA-like_sf"/>
</dbReference>
<dbReference type="InterPro" id="IPR036974">
    <property type="entry name" value="PUA_sf"/>
</dbReference>
<dbReference type="InterPro" id="IPR023542">
    <property type="entry name" value="RLMI"/>
</dbReference>
<dbReference type="InterPro" id="IPR041532">
    <property type="entry name" value="RlmI-like_PUA"/>
</dbReference>
<dbReference type="InterPro" id="IPR019614">
    <property type="entry name" value="SAM-dep_methyl-trfase"/>
</dbReference>
<dbReference type="InterPro" id="IPR029063">
    <property type="entry name" value="SAM-dependent_MTases_sf"/>
</dbReference>
<dbReference type="NCBIfam" id="NF011707">
    <property type="entry name" value="PRK15128.1"/>
    <property type="match status" value="1"/>
</dbReference>
<dbReference type="PANTHER" id="PTHR42873">
    <property type="entry name" value="RIBOSOMAL RNA LARGE SUBUNIT METHYLTRANSFERASE"/>
    <property type="match status" value="1"/>
</dbReference>
<dbReference type="PANTHER" id="PTHR42873:SF1">
    <property type="entry name" value="S-ADENOSYLMETHIONINE-DEPENDENT METHYLTRANSFERASE DOMAIN-CONTAINING PROTEIN"/>
    <property type="match status" value="1"/>
</dbReference>
<dbReference type="Pfam" id="PF10672">
    <property type="entry name" value="Methyltrans_SAM"/>
    <property type="match status" value="1"/>
</dbReference>
<dbReference type="Pfam" id="PF17785">
    <property type="entry name" value="PUA_3"/>
    <property type="match status" value="1"/>
</dbReference>
<dbReference type="SMART" id="SM00359">
    <property type="entry name" value="PUA"/>
    <property type="match status" value="1"/>
</dbReference>
<dbReference type="SUPFAM" id="SSF88697">
    <property type="entry name" value="PUA domain-like"/>
    <property type="match status" value="1"/>
</dbReference>
<dbReference type="SUPFAM" id="SSF53335">
    <property type="entry name" value="S-adenosyl-L-methionine-dependent methyltransferases"/>
    <property type="match status" value="1"/>
</dbReference>
<dbReference type="PROSITE" id="PS50890">
    <property type="entry name" value="PUA"/>
    <property type="match status" value="1"/>
</dbReference>
<proteinExistence type="inferred from homology"/>
<protein>
    <recommendedName>
        <fullName evidence="1">Ribosomal RNA large subunit methyltransferase I</fullName>
        <ecNumber evidence="1">2.1.1.191</ecNumber>
    </recommendedName>
    <alternativeName>
        <fullName evidence="1">23S rRNA m5C1962 methyltransferase</fullName>
    </alternativeName>
    <alternativeName>
        <fullName evidence="1">rRNA (cytosine-C(5)-)-methyltransferase RlmI</fullName>
    </alternativeName>
</protein>
<name>RLMI_YERPG</name>
<keyword id="KW-0963">Cytoplasm</keyword>
<keyword id="KW-0489">Methyltransferase</keyword>
<keyword id="KW-0694">RNA-binding</keyword>
<keyword id="KW-0698">rRNA processing</keyword>
<keyword id="KW-0949">S-adenosyl-L-methionine</keyword>
<keyword id="KW-0808">Transferase</keyword>